<keyword id="KW-0012">Acyltransferase</keyword>
<keyword id="KW-0963">Cytoplasm</keyword>
<keyword id="KW-0408">Iron</keyword>
<keyword id="KW-0479">Metal-binding</keyword>
<keyword id="KW-0808">Transferase</keyword>
<keyword id="KW-0819">tRNA processing</keyword>
<proteinExistence type="inferred from homology"/>
<accession>B1XVZ2</accession>
<organism>
    <name type="scientific">Polynucleobacter necessarius subsp. necessarius (strain STIR1)</name>
    <dbReference type="NCBI Taxonomy" id="452638"/>
    <lineage>
        <taxon>Bacteria</taxon>
        <taxon>Pseudomonadati</taxon>
        <taxon>Pseudomonadota</taxon>
        <taxon>Betaproteobacteria</taxon>
        <taxon>Burkholderiales</taxon>
        <taxon>Burkholderiaceae</taxon>
        <taxon>Polynucleobacter</taxon>
    </lineage>
</organism>
<reference key="1">
    <citation type="journal article" date="2013" name="Proc. Natl. Acad. Sci. U.S.A.">
        <title>Polynucleobacter necessarius, a model for genome reduction in both free-living and symbiotic bacteria.</title>
        <authorList>
            <person name="Boscaro V."/>
            <person name="Felletti M."/>
            <person name="Vannini C."/>
            <person name="Ackerman M.S."/>
            <person name="Chain P.S."/>
            <person name="Malfatti S."/>
            <person name="Vergez L.M."/>
            <person name="Shin M."/>
            <person name="Doak T.G."/>
            <person name="Lynch M."/>
            <person name="Petroni G."/>
        </authorList>
    </citation>
    <scope>NUCLEOTIDE SEQUENCE [LARGE SCALE GENOMIC DNA]</scope>
    <source>
        <strain>STIR1</strain>
    </source>
</reference>
<dbReference type="EC" id="2.3.1.234" evidence="1"/>
<dbReference type="EMBL" id="CP001010">
    <property type="protein sequence ID" value="ACB44519.1"/>
    <property type="molecule type" value="Genomic_DNA"/>
</dbReference>
<dbReference type="SMR" id="B1XVZ2"/>
<dbReference type="STRING" id="452638.Pnec_1420"/>
<dbReference type="KEGG" id="pne:Pnec_1420"/>
<dbReference type="eggNOG" id="COG0533">
    <property type="taxonomic scope" value="Bacteria"/>
</dbReference>
<dbReference type="HOGENOM" id="CLU_023208_0_0_4"/>
<dbReference type="OrthoDB" id="9806197at2"/>
<dbReference type="GO" id="GO:0005737">
    <property type="term" value="C:cytoplasm"/>
    <property type="evidence" value="ECO:0007669"/>
    <property type="project" value="UniProtKB-SubCell"/>
</dbReference>
<dbReference type="GO" id="GO:0005506">
    <property type="term" value="F:iron ion binding"/>
    <property type="evidence" value="ECO:0007669"/>
    <property type="project" value="UniProtKB-UniRule"/>
</dbReference>
<dbReference type="GO" id="GO:0061711">
    <property type="term" value="F:N(6)-L-threonylcarbamoyladenine synthase activity"/>
    <property type="evidence" value="ECO:0007669"/>
    <property type="project" value="UniProtKB-EC"/>
</dbReference>
<dbReference type="GO" id="GO:0002949">
    <property type="term" value="P:tRNA threonylcarbamoyladenosine modification"/>
    <property type="evidence" value="ECO:0007669"/>
    <property type="project" value="UniProtKB-UniRule"/>
</dbReference>
<dbReference type="CDD" id="cd24133">
    <property type="entry name" value="ASKHA_NBD_TsaD_bac"/>
    <property type="match status" value="1"/>
</dbReference>
<dbReference type="FunFam" id="3.30.420.40:FF:000012">
    <property type="entry name" value="tRNA N6-adenosine threonylcarbamoyltransferase"/>
    <property type="match status" value="1"/>
</dbReference>
<dbReference type="FunFam" id="3.30.420.40:FF:000040">
    <property type="entry name" value="tRNA N6-adenosine threonylcarbamoyltransferase"/>
    <property type="match status" value="1"/>
</dbReference>
<dbReference type="Gene3D" id="3.30.420.40">
    <property type="match status" value="2"/>
</dbReference>
<dbReference type="HAMAP" id="MF_01445">
    <property type="entry name" value="TsaD"/>
    <property type="match status" value="1"/>
</dbReference>
<dbReference type="InterPro" id="IPR043129">
    <property type="entry name" value="ATPase_NBD"/>
</dbReference>
<dbReference type="InterPro" id="IPR000905">
    <property type="entry name" value="Gcp-like_dom"/>
</dbReference>
<dbReference type="InterPro" id="IPR017861">
    <property type="entry name" value="KAE1/TsaD"/>
</dbReference>
<dbReference type="InterPro" id="IPR017860">
    <property type="entry name" value="Peptidase_M22_CS"/>
</dbReference>
<dbReference type="InterPro" id="IPR022450">
    <property type="entry name" value="TsaD"/>
</dbReference>
<dbReference type="NCBIfam" id="TIGR00329">
    <property type="entry name" value="gcp_kae1"/>
    <property type="match status" value="1"/>
</dbReference>
<dbReference type="NCBIfam" id="TIGR03723">
    <property type="entry name" value="T6A_TsaD_YgjD"/>
    <property type="match status" value="1"/>
</dbReference>
<dbReference type="PANTHER" id="PTHR11735">
    <property type="entry name" value="TRNA N6-ADENOSINE THREONYLCARBAMOYLTRANSFERASE"/>
    <property type="match status" value="1"/>
</dbReference>
<dbReference type="PANTHER" id="PTHR11735:SF6">
    <property type="entry name" value="TRNA N6-ADENOSINE THREONYLCARBAMOYLTRANSFERASE, MITOCHONDRIAL"/>
    <property type="match status" value="1"/>
</dbReference>
<dbReference type="Pfam" id="PF00814">
    <property type="entry name" value="TsaD"/>
    <property type="match status" value="1"/>
</dbReference>
<dbReference type="PRINTS" id="PR00789">
    <property type="entry name" value="OSIALOPTASE"/>
</dbReference>
<dbReference type="SUPFAM" id="SSF53067">
    <property type="entry name" value="Actin-like ATPase domain"/>
    <property type="match status" value="2"/>
</dbReference>
<dbReference type="PROSITE" id="PS01016">
    <property type="entry name" value="GLYCOPROTEASE"/>
    <property type="match status" value="1"/>
</dbReference>
<protein>
    <recommendedName>
        <fullName evidence="1">tRNA N6-adenosine threonylcarbamoyltransferase</fullName>
        <ecNumber evidence="1">2.3.1.234</ecNumber>
    </recommendedName>
    <alternativeName>
        <fullName evidence="1">N6-L-threonylcarbamoyladenine synthase</fullName>
        <shortName evidence="1">t(6)A synthase</shortName>
    </alternativeName>
    <alternativeName>
        <fullName evidence="1">t(6)A37 threonylcarbamoyladenosine biosynthesis protein TsaD</fullName>
    </alternativeName>
    <alternativeName>
        <fullName evidence="1">tRNA threonylcarbamoyladenosine biosynthesis protein TsaD</fullName>
    </alternativeName>
</protein>
<gene>
    <name evidence="1" type="primary">tsaD</name>
    <name type="synonym">gcp</name>
    <name type="ordered locus">Pnec_1420</name>
</gene>
<name>TSAD_POLNS</name>
<sequence length="357" mass="37821">MIVLGIETSCDETGVALYNTTPWGEGKPAFQGILGQGLHSQIAMHRDYGGVVPELASRDHIRRVLPLLDQSLAQSSLKLTDIDAVAFTQGPGLAGALLVGSAFAKSLAQGLNLPSIGVHHLEGHLLSPLLGQTAPQFPFIALLVSGGHTQLMKVSGIGHYELLGETLDDAAGEAFDKTAKLLGLDYPGGAAISKLAEQGRSGIFDLPKPMLHSGDLDFSFSGLKTAVLNQVKKFEEKKIAISSEIAQFHADLARSFVNAIVAVLVSKSEKALKQTGCKHLVLAGGVGANLQLRSALNEKATRNNFEVHYPPLELCTDNGVMIAFAGALRMLAKNNGSTTSGAFDIKPRWDLQSNNLV</sequence>
<comment type="function">
    <text evidence="1">Required for the formation of a threonylcarbamoyl group on adenosine at position 37 (t(6)A37) in tRNAs that read codons beginning with adenine. Is involved in the transfer of the threonylcarbamoyl moiety of threonylcarbamoyl-AMP (TC-AMP) to the N6 group of A37, together with TsaE and TsaB. TsaD likely plays a direct catalytic role in this reaction.</text>
</comment>
<comment type="catalytic activity">
    <reaction evidence="1">
        <text>L-threonylcarbamoyladenylate + adenosine(37) in tRNA = N(6)-L-threonylcarbamoyladenosine(37) in tRNA + AMP + H(+)</text>
        <dbReference type="Rhea" id="RHEA:37059"/>
        <dbReference type="Rhea" id="RHEA-COMP:10162"/>
        <dbReference type="Rhea" id="RHEA-COMP:10163"/>
        <dbReference type="ChEBI" id="CHEBI:15378"/>
        <dbReference type="ChEBI" id="CHEBI:73682"/>
        <dbReference type="ChEBI" id="CHEBI:74411"/>
        <dbReference type="ChEBI" id="CHEBI:74418"/>
        <dbReference type="ChEBI" id="CHEBI:456215"/>
        <dbReference type="EC" id="2.3.1.234"/>
    </reaction>
</comment>
<comment type="cofactor">
    <cofactor evidence="1">
        <name>Fe(2+)</name>
        <dbReference type="ChEBI" id="CHEBI:29033"/>
    </cofactor>
    <text evidence="1">Binds 1 Fe(2+) ion per subunit.</text>
</comment>
<comment type="subcellular location">
    <subcellularLocation>
        <location evidence="1">Cytoplasm</location>
    </subcellularLocation>
</comment>
<comment type="similarity">
    <text evidence="1">Belongs to the KAE1 / TsaD family.</text>
</comment>
<feature type="chain" id="PRO_1000192691" description="tRNA N6-adenosine threonylcarbamoyltransferase">
    <location>
        <begin position="1"/>
        <end position="357"/>
    </location>
</feature>
<feature type="binding site" evidence="1">
    <location>
        <position position="120"/>
    </location>
    <ligand>
        <name>Fe cation</name>
        <dbReference type="ChEBI" id="CHEBI:24875"/>
    </ligand>
</feature>
<feature type="binding site" evidence="1">
    <location>
        <position position="124"/>
    </location>
    <ligand>
        <name>Fe cation</name>
        <dbReference type="ChEBI" id="CHEBI:24875"/>
    </ligand>
</feature>
<feature type="binding site" evidence="1">
    <location>
        <begin position="143"/>
        <end position="147"/>
    </location>
    <ligand>
        <name>substrate</name>
    </ligand>
</feature>
<feature type="binding site" evidence="1">
    <location>
        <position position="176"/>
    </location>
    <ligand>
        <name>substrate</name>
    </ligand>
</feature>
<feature type="binding site" evidence="1">
    <location>
        <position position="189"/>
    </location>
    <ligand>
        <name>substrate</name>
    </ligand>
</feature>
<feature type="binding site" evidence="1">
    <location>
        <position position="289"/>
    </location>
    <ligand>
        <name>substrate</name>
    </ligand>
</feature>
<feature type="binding site" evidence="1">
    <location>
        <position position="317"/>
    </location>
    <ligand>
        <name>Fe cation</name>
        <dbReference type="ChEBI" id="CHEBI:24875"/>
    </ligand>
</feature>
<evidence type="ECO:0000255" key="1">
    <source>
        <dbReference type="HAMAP-Rule" id="MF_01445"/>
    </source>
</evidence>